<feature type="chain" id="PRO_0000450384" description="Ankyrin repeat and LEM domain-containing protein 2 homolog">
    <location>
        <begin position="1"/>
        <end position="1174"/>
    </location>
</feature>
<feature type="repeat" description="ANK" evidence="1">
    <location>
        <begin position="338"/>
        <end position="367"/>
    </location>
</feature>
<feature type="region of interest" description="Disordered" evidence="2">
    <location>
        <begin position="37"/>
        <end position="74"/>
    </location>
</feature>
<feature type="region of interest" description="Disordered" evidence="2">
    <location>
        <begin position="141"/>
        <end position="230"/>
    </location>
</feature>
<feature type="region of interest" description="Disordered" evidence="2">
    <location>
        <begin position="519"/>
        <end position="543"/>
    </location>
</feature>
<feature type="region of interest" description="Disordered" evidence="2">
    <location>
        <begin position="961"/>
        <end position="981"/>
    </location>
</feature>
<feature type="compositionally biased region" description="Low complexity" evidence="2">
    <location>
        <begin position="37"/>
        <end position="56"/>
    </location>
</feature>
<feature type="compositionally biased region" description="Low complexity" evidence="2">
    <location>
        <begin position="150"/>
        <end position="164"/>
    </location>
</feature>
<feature type="compositionally biased region" description="Low complexity" evidence="2">
    <location>
        <begin position="174"/>
        <end position="198"/>
    </location>
</feature>
<feature type="compositionally biased region" description="Low complexity" evidence="2">
    <location>
        <begin position="205"/>
        <end position="219"/>
    </location>
</feature>
<feature type="compositionally biased region" description="Polar residues" evidence="2">
    <location>
        <begin position="521"/>
        <end position="532"/>
    </location>
</feature>
<feature type="compositionally biased region" description="Low complexity" evidence="2">
    <location>
        <begin position="533"/>
        <end position="543"/>
    </location>
</feature>
<feature type="splice variant" id="VSP_060611" description="In isoform F." evidence="6">
    <original>STYFGVYIPTSKAGCFEGSVSQCIGSIAAVNIKPSNPASGSASVASGSPSGSAASVQTGNADDGSAATKYEDPDYPP</original>
    <variation>PTHQHCHRHDGAA</variation>
    <location>
        <begin position="2"/>
        <end position="78"/>
    </location>
</feature>
<feature type="splice variant" id="VSP_060612" description="In isoform G." evidence="6">
    <location>
        <begin position="1040"/>
        <end position="1044"/>
    </location>
</feature>
<feature type="mutagenesis site" description="Pupal lethality at temperatures above 22 degrees Celsius. Larvae initially have normal brain sizes, but later in the third larval stage, the brain is smaller than in wild-type counterparts." evidence="3 4">
    <original>L</original>
    <variation>H</variation>
    <location>
        <position position="326"/>
    </location>
</feature>
<sequence>MSTYFGVYIPTSKAGCFEGSVSQCIGSIAAVNIKPSNPASGSASVASGSPSGSAASVQTGNADDGSAATKYEDPDYPPDSPLWLIFTEKSKALDILRHYKEARLREFPNLEQAESYVQFGFESIEALKRFCKAKPESKPIPIISGSGYKSSPTSTDNSCSSSPTGNGSGFIIPLGSNSSMSNLLLSDSPTSSPSSSSNVIANGRQQQMQQQQQQQPQQPDVSGEGPPFRAPTKQELVEFRKQIEGGHIDRVKRIIWENPRFLISSGDTPTSLKEGCRYNAMHICAQVNKARIAQLLLKTISDREFTQLYVGKKGSGKMCAALNISLLDYYLNMPDKGRGETPLHFAAKNGHVAMVEVLVSYPECKSLRNHEGKEPKEIICLRNANATHVTIKKLELLLYDPHFVPVLRSQSNTLPPKVGQPFSPKDPPNLQHKADDYEGLSVDLAISALAGPMSREKAMNFYRRWKTPPRVSNNVMSPLAGSPFSSPVKVTPSKSIFDRSAGNSSPVHSGRRVLFSPLAEATSSPKPTKNVPNGTNECEHNNNNVKPVYPLEFPATPIRKMKPDLFMAYRNNNSFDSPSLADDSQILDMSLSRSLNASLNDSFRERHIKNTDIEKGLEVVGRQLARQEQLEWREYWDFLDSFLDIGTTEGLARLEAYFLEKTEQQADKSETVWNFAHLHQYFDSMAGEQQQQLRKDKNEAAGATSPSAGVMTPYTCVEKSLQVFAKRITKTLINKIGNMVSINDTLLCELKRLKSLIVSFKDDARFISVDFSKVHSRIAHLVASYVTHSQEVSVAMRLQLLQMLRSLRQLLADERGREQHLGCVCASLLLMLEQAPTSAVHLPDTLKTEELCCAAWETEQCCACLWDANLSRKTSRRKRTKSLRAAAVVQSQGQLQDTSGSTGSSALHASLGVGSTSLGASRVVASASKDAWRRQQSDDEDYDSDEQVIFFDCTNVTLPYGSSSEDEENFRTPPQSLSPGISMDLEPRYELFIFGNEPTKRDLDVLNALSNVDIDKETLPHVYAWKTAMESYSCAEMNLFPSPRNVKVQKPEPWYSGTSSSHNSQPLLHPKRLLATPKLNAVVSGRRGSGPLTAPVTPRLARTPSAASIQVASETNGESVGTAVTPASPILSFAALTAATQSFQTPLNKVRGLFSQYRDQRSYNEGDTPLGNRN</sequence>
<protein>
    <recommendedName>
        <fullName evidence="8">Ankyrin repeat and LEM domain-containing protein 2 homolog</fullName>
    </recommendedName>
</protein>
<keyword id="KW-0025">Alternative splicing</keyword>
<keyword id="KW-0040">ANK repeat</keyword>
<keyword id="KW-0131">Cell cycle</keyword>
<keyword id="KW-0132">Cell division</keyword>
<keyword id="KW-0963">Cytoplasm</keyword>
<keyword id="KW-0256">Endoplasmic reticulum</keyword>
<keyword id="KW-0524">Neurogenesis</keyword>
<keyword id="KW-0539">Nucleus</keyword>
<keyword id="KW-1185">Reference proteome</keyword>
<name>ANKL2_DROME</name>
<accession>Q8MQX9</accession>
<accession>Q0KHR1</accession>
<accession>Q9VX44</accession>
<accession>X2JCC5</accession>
<proteinExistence type="evidence at protein level"/>
<reference evidence="9" key="1">
    <citation type="journal article" date="2000" name="Science">
        <title>The genome sequence of Drosophila melanogaster.</title>
        <authorList>
            <person name="Adams M.D."/>
            <person name="Celniker S.E."/>
            <person name="Holt R.A."/>
            <person name="Evans C.A."/>
            <person name="Gocayne J.D."/>
            <person name="Amanatides P.G."/>
            <person name="Scherer S.E."/>
            <person name="Li P.W."/>
            <person name="Hoskins R.A."/>
            <person name="Galle R.F."/>
            <person name="George R.A."/>
            <person name="Lewis S.E."/>
            <person name="Richards S."/>
            <person name="Ashburner M."/>
            <person name="Henderson S.N."/>
            <person name="Sutton G.G."/>
            <person name="Wortman J.R."/>
            <person name="Yandell M.D."/>
            <person name="Zhang Q."/>
            <person name="Chen L.X."/>
            <person name="Brandon R.C."/>
            <person name="Rogers Y.-H.C."/>
            <person name="Blazej R.G."/>
            <person name="Champe M."/>
            <person name="Pfeiffer B.D."/>
            <person name="Wan K.H."/>
            <person name="Doyle C."/>
            <person name="Baxter E.G."/>
            <person name="Helt G."/>
            <person name="Nelson C.R."/>
            <person name="Miklos G.L.G."/>
            <person name="Abril J.F."/>
            <person name="Agbayani A."/>
            <person name="An H.-J."/>
            <person name="Andrews-Pfannkoch C."/>
            <person name="Baldwin D."/>
            <person name="Ballew R.M."/>
            <person name="Basu A."/>
            <person name="Baxendale J."/>
            <person name="Bayraktaroglu L."/>
            <person name="Beasley E.M."/>
            <person name="Beeson K.Y."/>
            <person name="Benos P.V."/>
            <person name="Berman B.P."/>
            <person name="Bhandari D."/>
            <person name="Bolshakov S."/>
            <person name="Borkova D."/>
            <person name="Botchan M.R."/>
            <person name="Bouck J."/>
            <person name="Brokstein P."/>
            <person name="Brottier P."/>
            <person name="Burtis K.C."/>
            <person name="Busam D.A."/>
            <person name="Butler H."/>
            <person name="Cadieu E."/>
            <person name="Center A."/>
            <person name="Chandra I."/>
            <person name="Cherry J.M."/>
            <person name="Cawley S."/>
            <person name="Dahlke C."/>
            <person name="Davenport L.B."/>
            <person name="Davies P."/>
            <person name="de Pablos B."/>
            <person name="Delcher A."/>
            <person name="Deng Z."/>
            <person name="Mays A.D."/>
            <person name="Dew I."/>
            <person name="Dietz S.M."/>
            <person name="Dodson K."/>
            <person name="Doup L.E."/>
            <person name="Downes M."/>
            <person name="Dugan-Rocha S."/>
            <person name="Dunkov B.C."/>
            <person name="Dunn P."/>
            <person name="Durbin K.J."/>
            <person name="Evangelista C.C."/>
            <person name="Ferraz C."/>
            <person name="Ferriera S."/>
            <person name="Fleischmann W."/>
            <person name="Fosler C."/>
            <person name="Gabrielian A.E."/>
            <person name="Garg N.S."/>
            <person name="Gelbart W.M."/>
            <person name="Glasser K."/>
            <person name="Glodek A."/>
            <person name="Gong F."/>
            <person name="Gorrell J.H."/>
            <person name="Gu Z."/>
            <person name="Guan P."/>
            <person name="Harris M."/>
            <person name="Harris N.L."/>
            <person name="Harvey D.A."/>
            <person name="Heiman T.J."/>
            <person name="Hernandez J.R."/>
            <person name="Houck J."/>
            <person name="Hostin D."/>
            <person name="Houston K.A."/>
            <person name="Howland T.J."/>
            <person name="Wei M.-H."/>
            <person name="Ibegwam C."/>
            <person name="Jalali M."/>
            <person name="Kalush F."/>
            <person name="Karpen G.H."/>
            <person name="Ke Z."/>
            <person name="Kennison J.A."/>
            <person name="Ketchum K.A."/>
            <person name="Kimmel B.E."/>
            <person name="Kodira C.D."/>
            <person name="Kraft C.L."/>
            <person name="Kravitz S."/>
            <person name="Kulp D."/>
            <person name="Lai Z."/>
            <person name="Lasko P."/>
            <person name="Lei Y."/>
            <person name="Levitsky A.A."/>
            <person name="Li J.H."/>
            <person name="Li Z."/>
            <person name="Liang Y."/>
            <person name="Lin X."/>
            <person name="Liu X."/>
            <person name="Mattei B."/>
            <person name="McIntosh T.C."/>
            <person name="McLeod M.P."/>
            <person name="McPherson D."/>
            <person name="Merkulov G."/>
            <person name="Milshina N.V."/>
            <person name="Mobarry C."/>
            <person name="Morris J."/>
            <person name="Moshrefi A."/>
            <person name="Mount S.M."/>
            <person name="Moy M."/>
            <person name="Murphy B."/>
            <person name="Murphy L."/>
            <person name="Muzny D.M."/>
            <person name="Nelson D.L."/>
            <person name="Nelson D.R."/>
            <person name="Nelson K.A."/>
            <person name="Nixon K."/>
            <person name="Nusskern D.R."/>
            <person name="Pacleb J.M."/>
            <person name="Palazzolo M."/>
            <person name="Pittman G.S."/>
            <person name="Pan S."/>
            <person name="Pollard J."/>
            <person name="Puri V."/>
            <person name="Reese M.G."/>
            <person name="Reinert K."/>
            <person name="Remington K."/>
            <person name="Saunders R.D.C."/>
            <person name="Scheeler F."/>
            <person name="Shen H."/>
            <person name="Shue B.C."/>
            <person name="Siden-Kiamos I."/>
            <person name="Simpson M."/>
            <person name="Skupski M.P."/>
            <person name="Smith T.J."/>
            <person name="Spier E."/>
            <person name="Spradling A.C."/>
            <person name="Stapleton M."/>
            <person name="Strong R."/>
            <person name="Sun E."/>
            <person name="Svirskas R."/>
            <person name="Tector C."/>
            <person name="Turner R."/>
            <person name="Venter E."/>
            <person name="Wang A.H."/>
            <person name="Wang X."/>
            <person name="Wang Z.-Y."/>
            <person name="Wassarman D.A."/>
            <person name="Weinstock G.M."/>
            <person name="Weissenbach J."/>
            <person name="Williams S.M."/>
            <person name="Woodage T."/>
            <person name="Worley K.C."/>
            <person name="Wu D."/>
            <person name="Yang S."/>
            <person name="Yao Q.A."/>
            <person name="Ye J."/>
            <person name="Yeh R.-F."/>
            <person name="Zaveri J.S."/>
            <person name="Zhan M."/>
            <person name="Zhang G."/>
            <person name="Zhao Q."/>
            <person name="Zheng L."/>
            <person name="Zheng X.H."/>
            <person name="Zhong F.N."/>
            <person name="Zhong W."/>
            <person name="Zhou X."/>
            <person name="Zhu S.C."/>
            <person name="Zhu X."/>
            <person name="Smith H.O."/>
            <person name="Gibbs R.A."/>
            <person name="Myers E.W."/>
            <person name="Rubin G.M."/>
            <person name="Venter J.C."/>
        </authorList>
    </citation>
    <scope>NUCLEOTIDE SEQUENCE [LARGE SCALE GENOMIC DNA]</scope>
    <source>
        <strain evidence="9">Berkeley</strain>
    </source>
</reference>
<reference evidence="9" key="2">
    <citation type="journal article" date="2002" name="Genome Biol.">
        <title>Annotation of the Drosophila melanogaster euchromatic genome: a systematic review.</title>
        <authorList>
            <person name="Misra S."/>
            <person name="Crosby M.A."/>
            <person name="Mungall C.J."/>
            <person name="Matthews B.B."/>
            <person name="Campbell K.S."/>
            <person name="Hradecky P."/>
            <person name="Huang Y."/>
            <person name="Kaminker J.S."/>
            <person name="Millburn G.H."/>
            <person name="Prochnik S.E."/>
            <person name="Smith C.D."/>
            <person name="Tupy J.L."/>
            <person name="Whitfield E.J."/>
            <person name="Bayraktaroglu L."/>
            <person name="Berman B.P."/>
            <person name="Bettencourt B.R."/>
            <person name="Celniker S.E."/>
            <person name="de Grey A.D.N.J."/>
            <person name="Drysdale R.A."/>
            <person name="Harris N.L."/>
            <person name="Richter J."/>
            <person name="Russo S."/>
            <person name="Schroeder A.J."/>
            <person name="Shu S.Q."/>
            <person name="Stapleton M."/>
            <person name="Yamada C."/>
            <person name="Ashburner M."/>
            <person name="Gelbart W.M."/>
            <person name="Rubin G.M."/>
            <person name="Lewis S.E."/>
        </authorList>
    </citation>
    <scope>GENOME REANNOTATION</scope>
    <source>
        <strain evidence="9">Berkeley</strain>
    </source>
</reference>
<reference evidence="7" key="3">
    <citation type="journal article" date="2002" name="Genome Biol.">
        <title>A Drosophila full-length cDNA resource.</title>
        <authorList>
            <person name="Stapleton M."/>
            <person name="Carlson J.W."/>
            <person name="Brokstein P."/>
            <person name="Yu C."/>
            <person name="Champe M."/>
            <person name="George R.A."/>
            <person name="Guarin H."/>
            <person name="Kronmiller B."/>
            <person name="Pacleb J.M."/>
            <person name="Park S."/>
            <person name="Wan K.H."/>
            <person name="Rubin G.M."/>
            <person name="Celniker S.E."/>
        </authorList>
    </citation>
    <scope>NUCLEOTIDE SEQUENCE [LARGE SCALE MRNA] (ISOFORM D)</scope>
    <source>
        <tissue evidence="7">Embryo</tissue>
    </source>
</reference>
<reference evidence="6" key="4">
    <citation type="journal article" date="2014" name="Cell">
        <title>A drosophila genetic resource of mutants to study mechanisms underlying human genetic diseases.</title>
        <authorList>
            <person name="Yamamoto S."/>
            <person name="Jaiswal M."/>
            <person name="Charng W.L."/>
            <person name="Gambin T."/>
            <person name="Karaca E."/>
            <person name="Mirzaa G."/>
            <person name="Wiszniewski W."/>
            <person name="Sandoval H."/>
            <person name="Haelterman N.A."/>
            <person name="Xiong B."/>
            <person name="Zhang K."/>
            <person name="Bayat V."/>
            <person name="David G."/>
            <person name="Li T."/>
            <person name="Chen K."/>
            <person name="Gala U."/>
            <person name="Harel T."/>
            <person name="Pehlivan D."/>
            <person name="Penney S."/>
            <person name="Vissers L.E."/>
            <person name="de Ligt J."/>
            <person name="Jhangiani S.N."/>
            <person name="Xie Y."/>
            <person name="Tsang S.H."/>
            <person name="Parman Y."/>
            <person name="Sivaci M."/>
            <person name="Battaloglu E."/>
            <person name="Muzny D."/>
            <person name="Wan Y.W."/>
            <person name="Liu Z."/>
            <person name="Lin-Moore A.T."/>
            <person name="Clark R.D."/>
            <person name="Curry C.J."/>
            <person name="Link N."/>
            <person name="Schulze K.L."/>
            <person name="Boerwinkle E."/>
            <person name="Dobyns W.B."/>
            <person name="Allikmets R."/>
            <person name="Gibbs R.A."/>
            <person name="Chen R."/>
            <person name="Lupski J.R."/>
            <person name="Wangler M.F."/>
            <person name="Bellen H.J."/>
        </authorList>
    </citation>
    <scope>FUNCTION</scope>
    <scope>MUTAGENESIS OF LEU-326</scope>
</reference>
<reference evidence="6" key="5">
    <citation type="journal article" date="2018" name="Cell">
        <title>Comparative Flavivirus-Host Protein Interaction Mapping Reveals Mechanisms of Dengue and Zika Virus Pathogenesis.</title>
        <authorList>
            <person name="Shah P.S."/>
            <person name="Link N."/>
            <person name="Jang G.M."/>
            <person name="Sharp P.P."/>
            <person name="Zhu T."/>
            <person name="Swaney D.L."/>
            <person name="Johnson J.R."/>
            <person name="Von Dollen J."/>
            <person name="Ramage H.R."/>
            <person name="Satkamp L."/>
            <person name="Newton B."/>
            <person name="Huettenhain R."/>
            <person name="Petit M.J."/>
            <person name="Baum T."/>
            <person name="Everitt A."/>
            <person name="Laufman O."/>
            <person name="Tassetto M."/>
            <person name="Shales M."/>
            <person name="Stevenson E."/>
            <person name="Iglesias G.N."/>
            <person name="Shokat L."/>
            <person name="Tripathi S."/>
            <person name="Balasubramaniam V."/>
            <person name="Webb L.G."/>
            <person name="Aguirre S."/>
            <person name="Willsey A.J."/>
            <person name="Garcia-Sastre A."/>
            <person name="Pollard K.S."/>
            <person name="Cherry S."/>
            <person name="Gamarnik A.V."/>
            <person name="Marazzi I."/>
            <person name="Taunton J."/>
            <person name="Fernandez-Sesma A."/>
            <person name="Bellen H.J."/>
            <person name="Andino R."/>
            <person name="Krogan N.J."/>
        </authorList>
    </citation>
    <scope>FUNCTION</scope>
    <scope>MUTAGENESIS OF LEU-326</scope>
</reference>
<reference evidence="6" key="6">
    <citation type="journal article" date="2019" name="Dev. Cell">
        <title>Mutations in ANKLE2, a ZIKA Virus Target, Disrupt an Asymmetric Cell Division Pathway in Drosophila Neuroblasts to Cause Microcephaly.</title>
        <authorList>
            <person name="Link N."/>
            <person name="Chung H."/>
            <person name="Jolly A."/>
            <person name="Withers M."/>
            <person name="Tepe B."/>
            <person name="Arenkiel B.R."/>
            <person name="Shah P.S."/>
            <person name="Krogan N.J."/>
            <person name="Aydin H."/>
            <person name="Geckinli B.B."/>
            <person name="Tos T."/>
            <person name="Isikay S."/>
            <person name="Tuysuz B."/>
            <person name="Mochida G.H."/>
            <person name="Thomas A.X."/>
            <person name="Clark R.D."/>
            <person name="Mirzaa G.M."/>
            <person name="Lupski J.R."/>
            <person name="Bellen H.J."/>
        </authorList>
    </citation>
    <scope>FUNCTION</scope>
    <scope>SUBCELLULAR LOCATION</scope>
    <scope>DEVELOPMENTAL STAGE</scope>
    <scope>DISRUPTION PHENOTYPE</scope>
</reference>
<comment type="function">
    <text evidence="3 4 5">Involved in brain development probably by regulating asymmetric division of neuroblasts (PubMed:25259927, PubMed:30550790, PubMed:31735666). Regulates neuroblast asymmetric cell division by controlling asymmetric protein localization of Mira, Baz, Par-6 and aPKC, and spindle alignment (PubMed:31735666). Also, regulates the localization of kinase Ball during mitosis, specifically maintaining Ball in the nucleus during interphase (PubMed:31735666). Required for proper ER and nuclear envelope morphology in neuroblasts (PubMed:31735666).</text>
</comment>
<comment type="subcellular location">
    <subcellularLocation>
        <location evidence="5">Endoplasmic reticulum</location>
    </subcellularLocation>
    <subcellularLocation>
        <location evidence="5">Nucleus envelope</location>
    </subcellularLocation>
    <subcellularLocation>
        <location evidence="5">Cytoplasm</location>
    </subcellularLocation>
    <text evidence="5">In neuroblasts, recruited to the nuclear envelope at the initiation of mitosis and remains associated with it until the beginning of cytokinesis.</text>
</comment>
<comment type="alternative products">
    <event type="alternative splicing"/>
    <isoform>
        <id>Q8MQX9-1</id>
        <name evidence="8">D</name>
        <name evidence="8">E</name>
        <sequence type="displayed"/>
    </isoform>
    <isoform>
        <id>Q8MQX9-2</id>
        <name evidence="8">F</name>
        <sequence type="described" ref="VSP_060611"/>
    </isoform>
    <isoform>
        <id>Q8MQX9-3</id>
        <name evidence="8">G</name>
        <sequence type="described" ref="VSP_060612"/>
    </isoform>
</comment>
<comment type="developmental stage">
    <text evidence="5">Expressed in embryo, wing disk and eye disk. Broadly expressed in 3rd instar larval brain, including neuroblasts, ganglion mother cells, and neurons.</text>
</comment>
<comment type="disruption phenotype">
    <text evidence="5">Animals die as third instar larvae, are smaller than wild-type and show very severely reduced brain volume (PubMed:31735666). Complete disruption of brain morphology, especially the optic lobe, in 3rd instar larvae (PubMed:31735666).</text>
</comment>
<comment type="similarity">
    <text evidence="6">Belongs to the ANKLE2 family.</text>
</comment>
<evidence type="ECO:0000255" key="1"/>
<evidence type="ECO:0000256" key="2">
    <source>
        <dbReference type="SAM" id="MobiDB-lite"/>
    </source>
</evidence>
<evidence type="ECO:0000269" key="3">
    <source>
    </source>
</evidence>
<evidence type="ECO:0000269" key="4">
    <source>
    </source>
</evidence>
<evidence type="ECO:0000269" key="5">
    <source>
    </source>
</evidence>
<evidence type="ECO:0000305" key="6"/>
<evidence type="ECO:0000312" key="7">
    <source>
        <dbReference type="EMBL" id="AAM52753.1"/>
    </source>
</evidence>
<evidence type="ECO:0000312" key="8">
    <source>
        <dbReference type="FlyBase" id="FBgn0028343"/>
    </source>
</evidence>
<evidence type="ECO:0000312" key="9">
    <source>
        <dbReference type="Proteomes" id="UP000000803"/>
    </source>
</evidence>
<dbReference type="EMBL" id="AE014298">
    <property type="protein sequence ID" value="AAF48735.2"/>
    <property type="molecule type" value="Genomic_DNA"/>
</dbReference>
<dbReference type="EMBL" id="AE014298">
    <property type="protein sequence ID" value="AAF48736.2"/>
    <property type="molecule type" value="Genomic_DNA"/>
</dbReference>
<dbReference type="EMBL" id="AE014298">
    <property type="protein sequence ID" value="AAF48737.2"/>
    <property type="molecule type" value="Genomic_DNA"/>
</dbReference>
<dbReference type="EMBL" id="AE014298">
    <property type="protein sequence ID" value="AHN59845.1"/>
    <property type="molecule type" value="Genomic_DNA"/>
</dbReference>
<dbReference type="EMBL" id="AY122241">
    <property type="protein sequence ID" value="AAM52753.1"/>
    <property type="molecule type" value="mRNA"/>
</dbReference>
<dbReference type="RefSeq" id="NP_001285375.1">
    <molecule id="Q8MQX9-3"/>
    <property type="nucleotide sequence ID" value="NM_001298446.1"/>
</dbReference>
<dbReference type="RefSeq" id="NP_573221.2">
    <molecule id="Q8MQX9-1"/>
    <property type="nucleotide sequence ID" value="NM_132993.3"/>
</dbReference>
<dbReference type="RefSeq" id="NP_728082.2">
    <molecule id="Q8MQX9-1"/>
    <property type="nucleotide sequence ID" value="NM_167569.2"/>
</dbReference>
<dbReference type="RefSeq" id="NP_728083.2">
    <molecule id="Q8MQX9-2"/>
    <property type="nucleotide sequence ID" value="NM_167570.2"/>
</dbReference>
<dbReference type="SMR" id="Q8MQX9"/>
<dbReference type="FunCoup" id="Q8MQX9">
    <property type="interactions" value="2892"/>
</dbReference>
<dbReference type="IntAct" id="Q8MQX9">
    <property type="interactions" value="2"/>
</dbReference>
<dbReference type="STRING" id="7227.FBpp0290628"/>
<dbReference type="GlyGen" id="Q8MQX9">
    <property type="glycosylation" value="2 sites"/>
</dbReference>
<dbReference type="PaxDb" id="7227-FBpp0290627"/>
<dbReference type="DNASU" id="32732"/>
<dbReference type="EnsemblMetazoa" id="FBtr0301413">
    <molecule id="Q8MQX9-1"/>
    <property type="protein sequence ID" value="FBpp0290627"/>
    <property type="gene ID" value="FBgn0028343"/>
</dbReference>
<dbReference type="EnsemblMetazoa" id="FBtr0301414">
    <molecule id="Q8MQX9-1"/>
    <property type="protein sequence ID" value="FBpp0290628"/>
    <property type="gene ID" value="FBgn0028343"/>
</dbReference>
<dbReference type="EnsemblMetazoa" id="FBtr0301415">
    <molecule id="Q8MQX9-2"/>
    <property type="protein sequence ID" value="FBpp0290629"/>
    <property type="gene ID" value="FBgn0028343"/>
</dbReference>
<dbReference type="EnsemblMetazoa" id="FBtr0340625">
    <molecule id="Q8MQX9-3"/>
    <property type="protein sequence ID" value="FBpp0309489"/>
    <property type="gene ID" value="FBgn0028343"/>
</dbReference>
<dbReference type="GeneID" id="32732"/>
<dbReference type="KEGG" id="dme:Dmel_CG8465"/>
<dbReference type="UCSC" id="CG8465-RA">
    <property type="organism name" value="d. melanogaster"/>
</dbReference>
<dbReference type="UCSC" id="CG8465-RC">
    <property type="organism name" value="d. melanogaster"/>
</dbReference>
<dbReference type="AGR" id="FB:FBgn0028343"/>
<dbReference type="CTD" id="23141"/>
<dbReference type="FlyBase" id="FBgn0028343">
    <property type="gene designation" value="Ankle2"/>
</dbReference>
<dbReference type="VEuPathDB" id="VectorBase:FBgn0028343"/>
<dbReference type="eggNOG" id="ENOG502QQ4Z">
    <property type="taxonomic scope" value="Eukaryota"/>
</dbReference>
<dbReference type="GeneTree" id="ENSGT00390000016767"/>
<dbReference type="HOGENOM" id="CLU_277464_0_0_1"/>
<dbReference type="InParanoid" id="Q8MQX9"/>
<dbReference type="OMA" id="RVKRIVW"/>
<dbReference type="OrthoDB" id="7446186at2759"/>
<dbReference type="PhylomeDB" id="Q8MQX9"/>
<dbReference type="Reactome" id="R-DME-2995383">
    <property type="pathway name" value="Initiation of Nuclear Envelope (NE) Reformation"/>
</dbReference>
<dbReference type="BioGRID-ORCS" id="32732">
    <property type="hits" value="1 hit in 1 CRISPR screen"/>
</dbReference>
<dbReference type="GenomeRNAi" id="32732"/>
<dbReference type="PRO" id="PR:Q8MQX9"/>
<dbReference type="Proteomes" id="UP000000803">
    <property type="component" value="Chromosome X"/>
</dbReference>
<dbReference type="Bgee" id="FBgn0028343">
    <property type="expression patterns" value="Expressed in egg cell and 151 other cell types or tissues"/>
</dbReference>
<dbReference type="ExpressionAtlas" id="Q8MQX9">
    <property type="expression patterns" value="baseline and differential"/>
</dbReference>
<dbReference type="GO" id="GO:0005737">
    <property type="term" value="C:cytoplasm"/>
    <property type="evidence" value="ECO:0000314"/>
    <property type="project" value="UniProtKB"/>
</dbReference>
<dbReference type="GO" id="GO:0012505">
    <property type="term" value="C:endomembrane system"/>
    <property type="evidence" value="ECO:0007005"/>
    <property type="project" value="FlyBase"/>
</dbReference>
<dbReference type="GO" id="GO:0005783">
    <property type="term" value="C:endoplasmic reticulum"/>
    <property type="evidence" value="ECO:0000314"/>
    <property type="project" value="UniProtKB"/>
</dbReference>
<dbReference type="GO" id="GO:0005635">
    <property type="term" value="C:nuclear envelope"/>
    <property type="evidence" value="ECO:0000314"/>
    <property type="project" value="UniProtKB"/>
</dbReference>
<dbReference type="GO" id="GO:0051721">
    <property type="term" value="F:protein phosphatase 2A binding"/>
    <property type="evidence" value="ECO:0000318"/>
    <property type="project" value="GO_Central"/>
</dbReference>
<dbReference type="GO" id="GO:0055059">
    <property type="term" value="P:asymmetric neuroblast division"/>
    <property type="evidence" value="ECO:0000315"/>
    <property type="project" value="UniProtKB"/>
</dbReference>
<dbReference type="GO" id="GO:0045167">
    <property type="term" value="P:asymmetric protein localization involved in cell fate determination"/>
    <property type="evidence" value="ECO:0000315"/>
    <property type="project" value="UniProtKB"/>
</dbReference>
<dbReference type="GO" id="GO:0007029">
    <property type="term" value="P:endoplasmic reticulum organization"/>
    <property type="evidence" value="ECO:0000315"/>
    <property type="project" value="UniProtKB"/>
</dbReference>
<dbReference type="GO" id="GO:0007084">
    <property type="term" value="P:mitotic nuclear membrane reassembly"/>
    <property type="evidence" value="ECO:0000318"/>
    <property type="project" value="GO_Central"/>
</dbReference>
<dbReference type="GO" id="GO:0031468">
    <property type="term" value="P:nuclear membrane reassembly"/>
    <property type="evidence" value="ECO:0000315"/>
    <property type="project" value="UniProtKB"/>
</dbReference>
<dbReference type="GO" id="GO:0051653">
    <property type="term" value="P:spindle localization"/>
    <property type="evidence" value="ECO:0000315"/>
    <property type="project" value="UniProtKB"/>
</dbReference>
<dbReference type="FunFam" id="1.25.40.20:FF:000072">
    <property type="entry name" value="Ankyrin repeat and LEM domain containing 2"/>
    <property type="match status" value="1"/>
</dbReference>
<dbReference type="Gene3D" id="1.25.40.20">
    <property type="entry name" value="Ankyrin repeat-containing domain"/>
    <property type="match status" value="1"/>
</dbReference>
<dbReference type="InterPro" id="IPR056237">
    <property type="entry name" value="ANKLE2_3rd"/>
</dbReference>
<dbReference type="InterPro" id="IPR002110">
    <property type="entry name" value="Ankyrin_rpt"/>
</dbReference>
<dbReference type="InterPro" id="IPR036770">
    <property type="entry name" value="Ankyrin_rpt-contain_sf"/>
</dbReference>
<dbReference type="PANTHER" id="PTHR12349">
    <property type="entry name" value="ANKYRIN REPEAT AND LEM DOMAIN-CONTAINING PROTEIN 2"/>
    <property type="match status" value="1"/>
</dbReference>
<dbReference type="PANTHER" id="PTHR12349:SF4">
    <property type="entry name" value="ANKYRIN REPEAT AND LEM DOMAIN-CONTAINING PROTEIN 2"/>
    <property type="match status" value="1"/>
</dbReference>
<dbReference type="Pfam" id="PF00023">
    <property type="entry name" value="Ank"/>
    <property type="match status" value="1"/>
</dbReference>
<dbReference type="Pfam" id="PF24567">
    <property type="entry name" value="ANKLE2_3rd"/>
    <property type="match status" value="2"/>
</dbReference>
<dbReference type="SMART" id="SM00248">
    <property type="entry name" value="ANK"/>
    <property type="match status" value="2"/>
</dbReference>
<dbReference type="SUPFAM" id="SSF48403">
    <property type="entry name" value="Ankyrin repeat"/>
    <property type="match status" value="1"/>
</dbReference>
<dbReference type="PROSITE" id="PS50297">
    <property type="entry name" value="ANK_REP_REGION"/>
    <property type="match status" value="1"/>
</dbReference>
<dbReference type="PROSITE" id="PS50088">
    <property type="entry name" value="ANK_REPEAT"/>
    <property type="match status" value="1"/>
</dbReference>
<organism evidence="9">
    <name type="scientific">Drosophila melanogaster</name>
    <name type="common">Fruit fly</name>
    <dbReference type="NCBI Taxonomy" id="7227"/>
    <lineage>
        <taxon>Eukaryota</taxon>
        <taxon>Metazoa</taxon>
        <taxon>Ecdysozoa</taxon>
        <taxon>Arthropoda</taxon>
        <taxon>Hexapoda</taxon>
        <taxon>Insecta</taxon>
        <taxon>Pterygota</taxon>
        <taxon>Neoptera</taxon>
        <taxon>Endopterygota</taxon>
        <taxon>Diptera</taxon>
        <taxon>Brachycera</taxon>
        <taxon>Muscomorpha</taxon>
        <taxon>Ephydroidea</taxon>
        <taxon>Drosophilidae</taxon>
        <taxon>Drosophila</taxon>
        <taxon>Sophophora</taxon>
    </lineage>
</organism>
<gene>
    <name evidence="8" type="primary">Ankle2</name>
    <name evidence="8" type="synonym">l(1)G0222</name>
    <name evidence="8" type="synonym">l(1)G0316</name>
    <name evidence="8" type="ORF">CG8465</name>
</gene>